<keyword id="KW-0131">Cell cycle</keyword>
<keyword id="KW-0132">Cell division</keyword>
<keyword id="KW-0997">Cell inner membrane</keyword>
<keyword id="KW-1003">Cell membrane</keyword>
<keyword id="KW-0133">Cell shape</keyword>
<keyword id="KW-0961">Cell wall biogenesis/degradation</keyword>
<keyword id="KW-0328">Glycosyltransferase</keyword>
<keyword id="KW-0472">Membrane</keyword>
<keyword id="KW-0573">Peptidoglycan synthesis</keyword>
<keyword id="KW-0808">Transferase</keyword>
<sequence>MSNKKRIFFTGGGTGGHVFPGISIIQKLKELDNEIEFFWIGKKNSIEEKLIKEQNNIKFIWVPCGKLRRYFSFQNFTDFFKVILGIIKSFYVLKKYKPQIVYATGGFVSTPTIIASSLLKIKRITHEMDLDPGLATKINSKFANKIYTSFKESEKYFKNHKNIIYTGSPIRKEFLTPNPKIIKQLTQNTNKPIVSVLGGSLGANALNNLALFIKKYAEIYFIHQSGKNLNDLREDNYLRRQFFNAEEMASIEKFSNIIISRAGAGAIKEFANACTCVILIPFKKGSRGDQIKNAKLLKNQNACIYIDEDEILNTNILKVIKETLNDREKINSLKENIKKFNNKHSSTLIAKLLIEDIKETKSK</sequence>
<dbReference type="EC" id="2.4.1.227" evidence="1"/>
<dbReference type="EMBL" id="CP000013">
    <property type="protein sequence ID" value="AAU07613.1"/>
    <property type="molecule type" value="Genomic_DNA"/>
</dbReference>
<dbReference type="RefSeq" id="WP_011194060.1">
    <property type="nucleotide sequence ID" value="NC_006156.1"/>
</dbReference>
<dbReference type="SMR" id="Q660A8"/>
<dbReference type="CAZy" id="GT28">
    <property type="family name" value="Glycosyltransferase Family 28"/>
</dbReference>
<dbReference type="GeneID" id="45161565"/>
<dbReference type="KEGG" id="bga:BG0790"/>
<dbReference type="eggNOG" id="COG0707">
    <property type="taxonomic scope" value="Bacteria"/>
</dbReference>
<dbReference type="HOGENOM" id="CLU_037404_0_0_12"/>
<dbReference type="OrthoDB" id="9808936at2"/>
<dbReference type="UniPathway" id="UPA00219"/>
<dbReference type="Proteomes" id="UP000002276">
    <property type="component" value="Chromosome"/>
</dbReference>
<dbReference type="GO" id="GO:0005886">
    <property type="term" value="C:plasma membrane"/>
    <property type="evidence" value="ECO:0007669"/>
    <property type="project" value="UniProtKB-SubCell"/>
</dbReference>
<dbReference type="GO" id="GO:0051991">
    <property type="term" value="F:UDP-N-acetyl-D-glucosamine:N-acetylmuramoyl-L-alanyl-D-glutamyl-meso-2,6-diaminopimelyl-D-alanyl-D-alanine-diphosphoundecaprenol 4-beta-N-acetylglucosaminlytransferase activity"/>
    <property type="evidence" value="ECO:0007669"/>
    <property type="project" value="RHEA"/>
</dbReference>
<dbReference type="GO" id="GO:0050511">
    <property type="term" value="F:undecaprenyldiphospho-muramoylpentapeptide beta-N-acetylglucosaminyltransferase activity"/>
    <property type="evidence" value="ECO:0007669"/>
    <property type="project" value="UniProtKB-UniRule"/>
</dbReference>
<dbReference type="GO" id="GO:0005975">
    <property type="term" value="P:carbohydrate metabolic process"/>
    <property type="evidence" value="ECO:0007669"/>
    <property type="project" value="InterPro"/>
</dbReference>
<dbReference type="GO" id="GO:0051301">
    <property type="term" value="P:cell division"/>
    <property type="evidence" value="ECO:0007669"/>
    <property type="project" value="UniProtKB-KW"/>
</dbReference>
<dbReference type="GO" id="GO:0071555">
    <property type="term" value="P:cell wall organization"/>
    <property type="evidence" value="ECO:0007669"/>
    <property type="project" value="UniProtKB-KW"/>
</dbReference>
<dbReference type="GO" id="GO:0030259">
    <property type="term" value="P:lipid glycosylation"/>
    <property type="evidence" value="ECO:0007669"/>
    <property type="project" value="UniProtKB-UniRule"/>
</dbReference>
<dbReference type="GO" id="GO:0009252">
    <property type="term" value="P:peptidoglycan biosynthetic process"/>
    <property type="evidence" value="ECO:0007669"/>
    <property type="project" value="UniProtKB-UniRule"/>
</dbReference>
<dbReference type="GO" id="GO:0008360">
    <property type="term" value="P:regulation of cell shape"/>
    <property type="evidence" value="ECO:0007669"/>
    <property type="project" value="UniProtKB-KW"/>
</dbReference>
<dbReference type="CDD" id="cd03785">
    <property type="entry name" value="GT28_MurG"/>
    <property type="match status" value="1"/>
</dbReference>
<dbReference type="Gene3D" id="3.40.50.2000">
    <property type="entry name" value="Glycogen Phosphorylase B"/>
    <property type="match status" value="2"/>
</dbReference>
<dbReference type="HAMAP" id="MF_00033">
    <property type="entry name" value="MurG"/>
    <property type="match status" value="1"/>
</dbReference>
<dbReference type="InterPro" id="IPR006009">
    <property type="entry name" value="GlcNAc_MurG"/>
</dbReference>
<dbReference type="InterPro" id="IPR007235">
    <property type="entry name" value="Glyco_trans_28_C"/>
</dbReference>
<dbReference type="InterPro" id="IPR004276">
    <property type="entry name" value="GlycoTrans_28_N"/>
</dbReference>
<dbReference type="NCBIfam" id="TIGR01133">
    <property type="entry name" value="murG"/>
    <property type="match status" value="1"/>
</dbReference>
<dbReference type="PANTHER" id="PTHR21015:SF27">
    <property type="entry name" value="UDP-N-ACETYLGLUCOSAMINE--N-ACETYLMURAMYL-(PENTAPEPTIDE) PYROPHOSPHORYL-UNDECAPRENOL N-ACETYLGLUCOSAMINE TRANSFERASE"/>
    <property type="match status" value="1"/>
</dbReference>
<dbReference type="PANTHER" id="PTHR21015">
    <property type="entry name" value="UDP-N-ACETYLGLUCOSAMINE--N-ACETYLMURAMYL-(PENTAPEPTIDE) PYROPHOSPHORYL-UNDECAPRENOL N-ACETYLGLUCOSAMINE TRANSFERASE 1"/>
    <property type="match status" value="1"/>
</dbReference>
<dbReference type="Pfam" id="PF04101">
    <property type="entry name" value="Glyco_tran_28_C"/>
    <property type="match status" value="1"/>
</dbReference>
<dbReference type="Pfam" id="PF03033">
    <property type="entry name" value="Glyco_transf_28"/>
    <property type="match status" value="1"/>
</dbReference>
<dbReference type="SUPFAM" id="SSF53756">
    <property type="entry name" value="UDP-Glycosyltransferase/glycogen phosphorylase"/>
    <property type="match status" value="1"/>
</dbReference>
<organism>
    <name type="scientific">Borrelia garinii subsp. bavariensis (strain ATCC BAA-2496 / DSM 23469 / PBi)</name>
    <name type="common">Borreliella bavariensis</name>
    <dbReference type="NCBI Taxonomy" id="290434"/>
    <lineage>
        <taxon>Bacteria</taxon>
        <taxon>Pseudomonadati</taxon>
        <taxon>Spirochaetota</taxon>
        <taxon>Spirochaetia</taxon>
        <taxon>Spirochaetales</taxon>
        <taxon>Borreliaceae</taxon>
        <taxon>Borreliella</taxon>
    </lineage>
</organism>
<proteinExistence type="inferred from homology"/>
<name>MURG_BORGP</name>
<evidence type="ECO:0000255" key="1">
    <source>
        <dbReference type="HAMAP-Rule" id="MF_00033"/>
    </source>
</evidence>
<protein>
    <recommendedName>
        <fullName evidence="1">UDP-N-acetylglucosamine--N-acetylmuramyl-(pentapeptide) pyrophosphoryl-undecaprenol N-acetylglucosamine transferase</fullName>
        <ecNumber evidence="1">2.4.1.227</ecNumber>
    </recommendedName>
    <alternativeName>
        <fullName evidence="1">Undecaprenyl-PP-MurNAc-pentapeptide-UDPGlcNAc GlcNAc transferase</fullName>
    </alternativeName>
</protein>
<feature type="chain" id="PRO_0000225034" description="UDP-N-acetylglucosamine--N-acetylmuramyl-(pentapeptide) pyrophosphoryl-undecaprenol N-acetylglucosamine transferase">
    <location>
        <begin position="1"/>
        <end position="363"/>
    </location>
</feature>
<feature type="binding site" evidence="1">
    <location>
        <begin position="14"/>
        <end position="16"/>
    </location>
    <ligand>
        <name>UDP-N-acetyl-alpha-D-glucosamine</name>
        <dbReference type="ChEBI" id="CHEBI:57705"/>
    </ligand>
</feature>
<feature type="binding site" evidence="1">
    <location>
        <position position="171"/>
    </location>
    <ligand>
        <name>UDP-N-acetyl-alpha-D-glucosamine</name>
        <dbReference type="ChEBI" id="CHEBI:57705"/>
    </ligand>
</feature>
<feature type="binding site" evidence="1">
    <location>
        <position position="200"/>
    </location>
    <ligand>
        <name>UDP-N-acetyl-alpha-D-glucosamine</name>
        <dbReference type="ChEBI" id="CHEBI:57705"/>
    </ligand>
</feature>
<feature type="binding site" evidence="1">
    <location>
        <position position="290"/>
    </location>
    <ligand>
        <name>UDP-N-acetyl-alpha-D-glucosamine</name>
        <dbReference type="ChEBI" id="CHEBI:57705"/>
    </ligand>
</feature>
<reference key="1">
    <citation type="journal article" date="2004" name="Nucleic Acids Res.">
        <title>Comparative analysis of the Borrelia garinii genome.</title>
        <authorList>
            <person name="Gloeckner G."/>
            <person name="Lehmann R."/>
            <person name="Romualdi A."/>
            <person name="Pradella S."/>
            <person name="Schulte-Spechtel U."/>
            <person name="Schilhabel M."/>
            <person name="Wilske B."/>
            <person name="Suehnel J."/>
            <person name="Platzer M."/>
        </authorList>
    </citation>
    <scope>NUCLEOTIDE SEQUENCE [LARGE SCALE GENOMIC DNA]</scope>
    <source>
        <strain>ATCC BAA-2496 / DSM 23469 / PBi</strain>
    </source>
</reference>
<comment type="function">
    <text evidence="1">Cell wall formation. Catalyzes the transfer of a GlcNAc subunit on undecaprenyl-pyrophosphoryl-MurNAc-pentapeptide (lipid intermediate I) to form undecaprenyl-pyrophosphoryl-MurNAc-(pentapeptide)GlcNAc (lipid intermediate II).</text>
</comment>
<comment type="catalytic activity">
    <reaction evidence="1">
        <text>di-trans,octa-cis-undecaprenyl diphospho-N-acetyl-alpha-D-muramoyl-L-alanyl-D-glutamyl-meso-2,6-diaminopimeloyl-D-alanyl-D-alanine + UDP-N-acetyl-alpha-D-glucosamine = di-trans,octa-cis-undecaprenyl diphospho-[N-acetyl-alpha-D-glucosaminyl-(1-&gt;4)]-N-acetyl-alpha-D-muramoyl-L-alanyl-D-glutamyl-meso-2,6-diaminopimeloyl-D-alanyl-D-alanine + UDP + H(+)</text>
        <dbReference type="Rhea" id="RHEA:31227"/>
        <dbReference type="ChEBI" id="CHEBI:15378"/>
        <dbReference type="ChEBI" id="CHEBI:57705"/>
        <dbReference type="ChEBI" id="CHEBI:58223"/>
        <dbReference type="ChEBI" id="CHEBI:61387"/>
        <dbReference type="ChEBI" id="CHEBI:61388"/>
        <dbReference type="EC" id="2.4.1.227"/>
    </reaction>
</comment>
<comment type="pathway">
    <text evidence="1">Cell wall biogenesis; peptidoglycan biosynthesis.</text>
</comment>
<comment type="subcellular location">
    <subcellularLocation>
        <location evidence="1">Cell inner membrane</location>
        <topology evidence="1">Peripheral membrane protein</topology>
        <orientation evidence="1">Cytoplasmic side</orientation>
    </subcellularLocation>
</comment>
<comment type="similarity">
    <text evidence="1">Belongs to the glycosyltransferase 28 family. MurG subfamily.</text>
</comment>
<accession>Q660A8</accession>
<gene>
    <name evidence="1" type="primary">murG</name>
    <name type="ordered locus">BG0790</name>
</gene>